<comment type="function">
    <text evidence="1">One of the primary rRNA binding proteins, it binds directly to 16S rRNA central domain where it helps coordinate assembly of the platform of the 30S subunit.</text>
</comment>
<comment type="subunit">
    <text evidence="1">Part of the 30S ribosomal subunit.</text>
</comment>
<comment type="similarity">
    <text evidence="1">Belongs to the universal ribosomal protein uS8 family.</text>
</comment>
<feature type="chain" id="PRO_1000214269" description="Small ribosomal subunit protein uS8">
    <location>
        <begin position="1"/>
        <end position="133"/>
    </location>
</feature>
<accession>C3MVJ3</accession>
<gene>
    <name evidence="1" type="primary">rps8</name>
    <name type="ordered locus">M1425_1435</name>
</gene>
<proteinExistence type="inferred from homology"/>
<reference key="1">
    <citation type="journal article" date="2009" name="Proc. Natl. Acad. Sci. U.S.A.">
        <title>Biogeography of the Sulfolobus islandicus pan-genome.</title>
        <authorList>
            <person name="Reno M.L."/>
            <person name="Held N.L."/>
            <person name="Fields C.J."/>
            <person name="Burke P.V."/>
            <person name="Whitaker R.J."/>
        </authorList>
    </citation>
    <scope>NUCLEOTIDE SEQUENCE [LARGE SCALE GENOMIC DNA]</scope>
    <source>
        <strain>M.14.25 / Kamchatka #1</strain>
    </source>
</reference>
<name>RS8_SACI4</name>
<evidence type="ECO:0000255" key="1">
    <source>
        <dbReference type="HAMAP-Rule" id="MF_01302"/>
    </source>
</evidence>
<evidence type="ECO:0000305" key="2"/>
<organism>
    <name type="scientific">Saccharolobus islandicus (strain M.14.25 / Kamchatka #1)</name>
    <name type="common">Sulfolobus islandicus</name>
    <dbReference type="NCBI Taxonomy" id="427317"/>
    <lineage>
        <taxon>Archaea</taxon>
        <taxon>Thermoproteota</taxon>
        <taxon>Thermoprotei</taxon>
        <taxon>Sulfolobales</taxon>
        <taxon>Sulfolobaceae</taxon>
        <taxon>Saccharolobus</taxon>
    </lineage>
</organism>
<sequence length="133" mass="15096">MVFVNPLANALTSIYNNEMRRNKQAIIMPASKLVINVLRVMQKEGYVGEFEYIDDGRWGKITVQLLGRVNKCGPITPRYPLSYRQMIALPDYIRRYLPSKEIGIIIVSTSKGVMSHKEAARMRLGGVALGYVY</sequence>
<dbReference type="EMBL" id="CP001400">
    <property type="protein sequence ID" value="ACP38188.1"/>
    <property type="molecule type" value="Genomic_DNA"/>
</dbReference>
<dbReference type="RefSeq" id="WP_012711433.1">
    <property type="nucleotide sequence ID" value="NC_012588.1"/>
</dbReference>
<dbReference type="SMR" id="C3MVJ3"/>
<dbReference type="KEGG" id="sia:M1425_1435"/>
<dbReference type="HOGENOM" id="CLU_098428_1_1_2"/>
<dbReference type="Proteomes" id="UP000001350">
    <property type="component" value="Chromosome"/>
</dbReference>
<dbReference type="GO" id="GO:1990904">
    <property type="term" value="C:ribonucleoprotein complex"/>
    <property type="evidence" value="ECO:0007669"/>
    <property type="project" value="UniProtKB-KW"/>
</dbReference>
<dbReference type="GO" id="GO:0005840">
    <property type="term" value="C:ribosome"/>
    <property type="evidence" value="ECO:0007669"/>
    <property type="project" value="UniProtKB-KW"/>
</dbReference>
<dbReference type="GO" id="GO:0019843">
    <property type="term" value="F:rRNA binding"/>
    <property type="evidence" value="ECO:0007669"/>
    <property type="project" value="UniProtKB-UniRule"/>
</dbReference>
<dbReference type="GO" id="GO:0003735">
    <property type="term" value="F:structural constituent of ribosome"/>
    <property type="evidence" value="ECO:0007669"/>
    <property type="project" value="InterPro"/>
</dbReference>
<dbReference type="GO" id="GO:0006412">
    <property type="term" value="P:translation"/>
    <property type="evidence" value="ECO:0007669"/>
    <property type="project" value="UniProtKB-UniRule"/>
</dbReference>
<dbReference type="FunFam" id="3.30.1370.30:FF:000001">
    <property type="entry name" value="40S ribosomal protein S15a"/>
    <property type="match status" value="1"/>
</dbReference>
<dbReference type="Gene3D" id="3.30.1370.30">
    <property type="match status" value="1"/>
</dbReference>
<dbReference type="Gene3D" id="3.30.1490.10">
    <property type="match status" value="1"/>
</dbReference>
<dbReference type="HAMAP" id="MF_01302_A">
    <property type="entry name" value="Ribosomal_uS8_A"/>
    <property type="match status" value="1"/>
</dbReference>
<dbReference type="InterPro" id="IPR000630">
    <property type="entry name" value="Ribosomal_uS8"/>
</dbReference>
<dbReference type="InterPro" id="IPR047863">
    <property type="entry name" value="Ribosomal_uS8_CS"/>
</dbReference>
<dbReference type="InterPro" id="IPR035987">
    <property type="entry name" value="Ribosomal_uS8_sf"/>
</dbReference>
<dbReference type="NCBIfam" id="NF003115">
    <property type="entry name" value="PRK04034.1"/>
    <property type="match status" value="1"/>
</dbReference>
<dbReference type="PANTHER" id="PTHR11758">
    <property type="entry name" value="40S RIBOSOMAL PROTEIN S15A"/>
    <property type="match status" value="1"/>
</dbReference>
<dbReference type="Pfam" id="PF00410">
    <property type="entry name" value="Ribosomal_S8"/>
    <property type="match status" value="1"/>
</dbReference>
<dbReference type="SUPFAM" id="SSF56047">
    <property type="entry name" value="Ribosomal protein S8"/>
    <property type="match status" value="1"/>
</dbReference>
<dbReference type="PROSITE" id="PS00053">
    <property type="entry name" value="RIBOSOMAL_S8"/>
    <property type="match status" value="1"/>
</dbReference>
<keyword id="KW-0687">Ribonucleoprotein</keyword>
<keyword id="KW-0689">Ribosomal protein</keyword>
<keyword id="KW-0694">RNA-binding</keyword>
<keyword id="KW-0699">rRNA-binding</keyword>
<protein>
    <recommendedName>
        <fullName evidence="1">Small ribosomal subunit protein uS8</fullName>
    </recommendedName>
    <alternativeName>
        <fullName evidence="2">30S ribosomal protein S8</fullName>
    </alternativeName>
</protein>